<protein>
    <recommendedName>
        <fullName evidence="1">Leucine--tRNA ligase</fullName>
        <ecNumber evidence="1">6.1.1.4</ecNumber>
    </recommendedName>
    <alternativeName>
        <fullName evidence="1">Leucyl-tRNA synthetase</fullName>
        <shortName evidence="1">LeuRS</shortName>
    </alternativeName>
</protein>
<evidence type="ECO:0000255" key="1">
    <source>
        <dbReference type="HAMAP-Rule" id="MF_00049"/>
    </source>
</evidence>
<reference key="1">
    <citation type="journal article" date="2004" name="Science">
        <title>A predator unmasked: life cycle of Bdellovibrio bacteriovorus from a genomic perspective.</title>
        <authorList>
            <person name="Rendulic S."/>
            <person name="Jagtap P."/>
            <person name="Rosinus A."/>
            <person name="Eppinger M."/>
            <person name="Baar C."/>
            <person name="Lanz C."/>
            <person name="Keller H."/>
            <person name="Lambert C."/>
            <person name="Evans K.J."/>
            <person name="Goesmann A."/>
            <person name="Meyer F."/>
            <person name="Sockett R.E."/>
            <person name="Schuster S.C."/>
        </authorList>
    </citation>
    <scope>NUCLEOTIDE SEQUENCE [LARGE SCALE GENOMIC DNA]</scope>
    <source>
        <strain>ATCC 15356 / DSM 50701 / NCIMB 9529 / HD100</strain>
    </source>
</reference>
<feature type="chain" id="PRO_0000151977" description="Leucine--tRNA ligase">
    <location>
        <begin position="1"/>
        <end position="796"/>
    </location>
</feature>
<feature type="short sequence motif" description="'HIGH' region">
    <location>
        <begin position="40"/>
        <end position="51"/>
    </location>
</feature>
<feature type="short sequence motif" description="'KMSKS' region">
    <location>
        <begin position="569"/>
        <end position="573"/>
    </location>
</feature>
<feature type="binding site" evidence="1">
    <location>
        <position position="572"/>
    </location>
    <ligand>
        <name>ATP</name>
        <dbReference type="ChEBI" id="CHEBI:30616"/>
    </ligand>
</feature>
<keyword id="KW-0030">Aminoacyl-tRNA synthetase</keyword>
<keyword id="KW-0067">ATP-binding</keyword>
<keyword id="KW-0963">Cytoplasm</keyword>
<keyword id="KW-0436">Ligase</keyword>
<keyword id="KW-0547">Nucleotide-binding</keyword>
<keyword id="KW-0648">Protein biosynthesis</keyword>
<keyword id="KW-1185">Reference proteome</keyword>
<accession>Q6MQU3</accession>
<name>SYL_BDEBA</name>
<organism>
    <name type="scientific">Bdellovibrio bacteriovorus (strain ATCC 15356 / DSM 50701 / NCIMB 9529 / HD100)</name>
    <dbReference type="NCBI Taxonomy" id="264462"/>
    <lineage>
        <taxon>Bacteria</taxon>
        <taxon>Pseudomonadati</taxon>
        <taxon>Bdellovibrionota</taxon>
        <taxon>Bdellovibrionia</taxon>
        <taxon>Bdellovibrionales</taxon>
        <taxon>Pseudobdellovibrionaceae</taxon>
        <taxon>Bdellovibrio</taxon>
    </lineage>
</organism>
<comment type="catalytic activity">
    <reaction evidence="1">
        <text>tRNA(Leu) + L-leucine + ATP = L-leucyl-tRNA(Leu) + AMP + diphosphate</text>
        <dbReference type="Rhea" id="RHEA:11688"/>
        <dbReference type="Rhea" id="RHEA-COMP:9613"/>
        <dbReference type="Rhea" id="RHEA-COMP:9622"/>
        <dbReference type="ChEBI" id="CHEBI:30616"/>
        <dbReference type="ChEBI" id="CHEBI:33019"/>
        <dbReference type="ChEBI" id="CHEBI:57427"/>
        <dbReference type="ChEBI" id="CHEBI:78442"/>
        <dbReference type="ChEBI" id="CHEBI:78494"/>
        <dbReference type="ChEBI" id="CHEBI:456215"/>
        <dbReference type="EC" id="6.1.1.4"/>
    </reaction>
</comment>
<comment type="subcellular location">
    <subcellularLocation>
        <location evidence="1">Cytoplasm</location>
    </subcellularLocation>
</comment>
<comment type="similarity">
    <text evidence="1">Belongs to the class-I aminoacyl-tRNA synthetase family.</text>
</comment>
<proteinExistence type="inferred from homology"/>
<gene>
    <name evidence="1" type="primary">leuS</name>
    <name type="ordered locus">Bd0365</name>
</gene>
<sequence length="796" mass="89437">MSLNFTEYEAKWQKKWADAKAFQAETTSSKPKYYALDMFPYPSASGLHVGHMASYTPGDIISRYKRVNGFNVLHPMGYDAFGLPAEQYAIQTGVHPAITTKKAIDSFRKTLQTFGFSFDWSREISTCEPDYYKWTQFIFLKLYERGLAYQKEVPVNWCPALKTVLANDEVVDGKSERGGHPVIRVPMKQWMLKITDYAERLLNDLDKLDWPERTKEGQRNWIGKSEGARITFKVHGEKDTFEVFTTRPDTLFGVTFMVMAPEHPLVKKITSQPQYTAVENYIADTAKKSEVDRKASTEKTGVFTGAHATHPITGDKIEIWISDYVLMDYGTGAIMAVPGHDARDFEFATKFNIPIKSVLESDMLPFEGDSIMINSEFLDGLNKTEAISKMLKHLEENKLGVREVQYKLRDWLFSRQRYWGEPFPIVHFADGSKGVPVNELPVILPEVADYEPADTGEAPLARNADWVKYMDGDKEGRRETDTMPGAAGSSWYFLRYIDPKNTEAPFSPEAEKYWMPVDLYVGGPEHTVGHLLYARFWTKVLFDCGLVTHDEPFQKLAHQGMILGPDGEKMSKSRGNVISPEDIARSHGADALRTFISFMGPVDKDKPWAPTGIDGVKRFLDRITRLVVNDDGQLVATSEALTPEIEKLVHKTIKKVTEDIESMSFNTAISAMMILVNELYRAECRSVLAVKPLVQILAPFAPHLAEELWEKMNGEGLCALAPWPKYDNTLCADDTVTIGVQVNGKMRGTIEIGVAASEQEAVAAAKAVQQVAAVLGDKNPDKVIYKAGKILNLIVK</sequence>
<dbReference type="EC" id="6.1.1.4" evidence="1"/>
<dbReference type="EMBL" id="BX842646">
    <property type="protein sequence ID" value="CAE78015.1"/>
    <property type="molecule type" value="Genomic_DNA"/>
</dbReference>
<dbReference type="RefSeq" id="WP_011162956.1">
    <property type="nucleotide sequence ID" value="NC_005363.1"/>
</dbReference>
<dbReference type="SMR" id="Q6MQU3"/>
<dbReference type="STRING" id="264462.Bd0365"/>
<dbReference type="GeneID" id="93011489"/>
<dbReference type="KEGG" id="bba:Bd0365"/>
<dbReference type="eggNOG" id="COG0495">
    <property type="taxonomic scope" value="Bacteria"/>
</dbReference>
<dbReference type="HOGENOM" id="CLU_004427_0_0_7"/>
<dbReference type="Proteomes" id="UP000008080">
    <property type="component" value="Chromosome"/>
</dbReference>
<dbReference type="GO" id="GO:0005829">
    <property type="term" value="C:cytosol"/>
    <property type="evidence" value="ECO:0007669"/>
    <property type="project" value="TreeGrafter"/>
</dbReference>
<dbReference type="GO" id="GO:0002161">
    <property type="term" value="F:aminoacyl-tRNA deacylase activity"/>
    <property type="evidence" value="ECO:0007669"/>
    <property type="project" value="InterPro"/>
</dbReference>
<dbReference type="GO" id="GO:0005524">
    <property type="term" value="F:ATP binding"/>
    <property type="evidence" value="ECO:0007669"/>
    <property type="project" value="UniProtKB-UniRule"/>
</dbReference>
<dbReference type="GO" id="GO:0004823">
    <property type="term" value="F:leucine-tRNA ligase activity"/>
    <property type="evidence" value="ECO:0007669"/>
    <property type="project" value="UniProtKB-UniRule"/>
</dbReference>
<dbReference type="GO" id="GO:0006429">
    <property type="term" value="P:leucyl-tRNA aminoacylation"/>
    <property type="evidence" value="ECO:0007669"/>
    <property type="project" value="UniProtKB-UniRule"/>
</dbReference>
<dbReference type="CDD" id="cd07958">
    <property type="entry name" value="Anticodon_Ia_Leu_BEm"/>
    <property type="match status" value="1"/>
</dbReference>
<dbReference type="CDD" id="cd00812">
    <property type="entry name" value="LeuRS_core"/>
    <property type="match status" value="1"/>
</dbReference>
<dbReference type="FunFam" id="1.10.730.10:FF:000002">
    <property type="entry name" value="Leucine--tRNA ligase"/>
    <property type="match status" value="1"/>
</dbReference>
<dbReference type="FunFam" id="3.40.50.620:FF:000056">
    <property type="entry name" value="Leucine--tRNA ligase"/>
    <property type="match status" value="1"/>
</dbReference>
<dbReference type="FunFam" id="3.40.50.620:FF:000077">
    <property type="entry name" value="Leucine--tRNA ligase"/>
    <property type="match status" value="1"/>
</dbReference>
<dbReference type="Gene3D" id="3.10.20.590">
    <property type="match status" value="1"/>
</dbReference>
<dbReference type="Gene3D" id="3.40.50.620">
    <property type="entry name" value="HUPs"/>
    <property type="match status" value="2"/>
</dbReference>
<dbReference type="Gene3D" id="1.10.730.10">
    <property type="entry name" value="Isoleucyl-tRNA Synthetase, Domain 1"/>
    <property type="match status" value="1"/>
</dbReference>
<dbReference type="HAMAP" id="MF_00049_B">
    <property type="entry name" value="Leu_tRNA_synth_B"/>
    <property type="match status" value="1"/>
</dbReference>
<dbReference type="InterPro" id="IPR002300">
    <property type="entry name" value="aa-tRNA-synth_Ia"/>
</dbReference>
<dbReference type="InterPro" id="IPR002302">
    <property type="entry name" value="Leu-tRNA-ligase"/>
</dbReference>
<dbReference type="InterPro" id="IPR025709">
    <property type="entry name" value="Leu_tRNA-synth_edit"/>
</dbReference>
<dbReference type="InterPro" id="IPR013155">
    <property type="entry name" value="M/V/L/I-tRNA-synth_anticd-bd"/>
</dbReference>
<dbReference type="InterPro" id="IPR015413">
    <property type="entry name" value="Methionyl/Leucyl_tRNA_Synth"/>
</dbReference>
<dbReference type="InterPro" id="IPR014729">
    <property type="entry name" value="Rossmann-like_a/b/a_fold"/>
</dbReference>
<dbReference type="InterPro" id="IPR009080">
    <property type="entry name" value="tRNAsynth_Ia_anticodon-bd"/>
</dbReference>
<dbReference type="InterPro" id="IPR009008">
    <property type="entry name" value="Val/Leu/Ile-tRNA-synth_edit"/>
</dbReference>
<dbReference type="NCBIfam" id="TIGR00396">
    <property type="entry name" value="leuS_bact"/>
    <property type="match status" value="1"/>
</dbReference>
<dbReference type="PANTHER" id="PTHR43740:SF2">
    <property type="entry name" value="LEUCINE--TRNA LIGASE, MITOCHONDRIAL"/>
    <property type="match status" value="1"/>
</dbReference>
<dbReference type="PANTHER" id="PTHR43740">
    <property type="entry name" value="LEUCYL-TRNA SYNTHETASE"/>
    <property type="match status" value="1"/>
</dbReference>
<dbReference type="Pfam" id="PF08264">
    <property type="entry name" value="Anticodon_1"/>
    <property type="match status" value="1"/>
</dbReference>
<dbReference type="Pfam" id="PF00133">
    <property type="entry name" value="tRNA-synt_1"/>
    <property type="match status" value="1"/>
</dbReference>
<dbReference type="Pfam" id="PF13603">
    <property type="entry name" value="tRNA-synt_1_2"/>
    <property type="match status" value="1"/>
</dbReference>
<dbReference type="Pfam" id="PF09334">
    <property type="entry name" value="tRNA-synt_1g"/>
    <property type="match status" value="1"/>
</dbReference>
<dbReference type="PRINTS" id="PR00985">
    <property type="entry name" value="TRNASYNTHLEU"/>
</dbReference>
<dbReference type="SUPFAM" id="SSF47323">
    <property type="entry name" value="Anticodon-binding domain of a subclass of class I aminoacyl-tRNA synthetases"/>
    <property type="match status" value="1"/>
</dbReference>
<dbReference type="SUPFAM" id="SSF52374">
    <property type="entry name" value="Nucleotidylyl transferase"/>
    <property type="match status" value="1"/>
</dbReference>
<dbReference type="SUPFAM" id="SSF50677">
    <property type="entry name" value="ValRS/IleRS/LeuRS editing domain"/>
    <property type="match status" value="1"/>
</dbReference>